<organism>
    <name type="scientific">Gallus gallus</name>
    <name type="common">Chicken</name>
    <dbReference type="NCBI Taxonomy" id="9031"/>
    <lineage>
        <taxon>Eukaryota</taxon>
        <taxon>Metazoa</taxon>
        <taxon>Chordata</taxon>
        <taxon>Craniata</taxon>
        <taxon>Vertebrata</taxon>
        <taxon>Euteleostomi</taxon>
        <taxon>Archelosauria</taxon>
        <taxon>Archosauria</taxon>
        <taxon>Dinosauria</taxon>
        <taxon>Saurischia</taxon>
        <taxon>Theropoda</taxon>
        <taxon>Coelurosauria</taxon>
        <taxon>Aves</taxon>
        <taxon>Neognathae</taxon>
        <taxon>Galloanserae</taxon>
        <taxon>Galliformes</taxon>
        <taxon>Phasianidae</taxon>
        <taxon>Phasianinae</taxon>
        <taxon>Gallus</taxon>
    </lineage>
</organism>
<accession>P43449</accession>
<name>CCNA2_CHICK</name>
<sequence>MLAEQENQENVPPAAKAPPPAAGTRVALGLLRGGPARPGPAAQAARNGEGRGAAAGQQQQPFSVYVDEPDEERRRPQRKKERDEEAADAPGLRAALGTVGERRPLAPLGNAMELSLDSPSIMDISITSEAEERPNVNNVPDYVSDIHTYLREMEVKCKPKIGYMKKQPDITNNMRAILVDWLVEVGEEYKLQNETLHLAVNYIDRFLSSMSVLRGKLQLVGTAAMLLASKFEEIYPPEVAEFVYITDDTYNKKQVLRMEHLILKVLSFDLAAPTINQFLTQYFLHQQTNAKVESLSMYLGELTLIDADPYLKYLPSVIAAAAFHLASYTITGQTWPESLCKVTGYTLEHIKPCLMDLHRTYLKAAQHTQQSIREKYKSTKYHAVSLIDAPETLDL</sequence>
<reference key="1">
    <citation type="journal article" date="1993" name="J. Cell Sci.">
        <title>Nuclear localization of vertebrate cyclin A correlates with its ability to form complexes with cdk catalytic subunits.</title>
        <authorList>
            <person name="Maridor G."/>
            <person name="Gallant P."/>
            <person name="Golsteyn R."/>
            <person name="Nigg E.A."/>
        </authorList>
    </citation>
    <scope>NUCLEOTIDE SEQUENCE [MRNA]</scope>
    <scope>SUBCELLULAR LOCATION</scope>
    <scope>SUBUNIT</scope>
</reference>
<evidence type="ECO:0000250" key="1">
    <source>
        <dbReference type="UniProtKB" id="P20248"/>
    </source>
</evidence>
<evidence type="ECO:0000256" key="2">
    <source>
        <dbReference type="SAM" id="MobiDB-lite"/>
    </source>
</evidence>
<evidence type="ECO:0000269" key="3">
    <source>
    </source>
</evidence>
<evidence type="ECO:0000303" key="4">
    <source>
    </source>
</evidence>
<evidence type="ECO:0000305" key="5"/>
<dbReference type="EMBL" id="X72892">
    <property type="protein sequence ID" value="CAA51410.1"/>
    <property type="molecule type" value="mRNA"/>
</dbReference>
<dbReference type="PIR" id="S38812">
    <property type="entry name" value="S38812"/>
</dbReference>
<dbReference type="RefSeq" id="NP_990575.1">
    <property type="nucleotide sequence ID" value="NM_205244.2"/>
</dbReference>
<dbReference type="SMR" id="P43449"/>
<dbReference type="FunCoup" id="P43449">
    <property type="interactions" value="885"/>
</dbReference>
<dbReference type="STRING" id="9031.ENSGALP00000019361"/>
<dbReference type="GeneID" id="396172"/>
<dbReference type="KEGG" id="gga:396172"/>
<dbReference type="CTD" id="890"/>
<dbReference type="VEuPathDB" id="HostDB:geneid_396172"/>
<dbReference type="InParanoid" id="P43449"/>
<dbReference type="OrthoDB" id="5590282at2759"/>
<dbReference type="PhylomeDB" id="P43449"/>
<dbReference type="PRO" id="PR:P43449"/>
<dbReference type="Proteomes" id="UP000000539">
    <property type="component" value="Unassembled WGS sequence"/>
</dbReference>
<dbReference type="GO" id="GO:0097124">
    <property type="term" value="C:cyclin A2-CDK2 complex"/>
    <property type="evidence" value="ECO:0000318"/>
    <property type="project" value="GO_Central"/>
</dbReference>
<dbReference type="GO" id="GO:0000307">
    <property type="term" value="C:cyclin-dependent protein kinase holoenzyme complex"/>
    <property type="evidence" value="ECO:0000314"/>
    <property type="project" value="UniProtKB"/>
</dbReference>
<dbReference type="GO" id="GO:0005737">
    <property type="term" value="C:cytoplasm"/>
    <property type="evidence" value="ECO:0000250"/>
    <property type="project" value="UniProtKB"/>
</dbReference>
<dbReference type="GO" id="GO:0005815">
    <property type="term" value="C:microtubule organizing center"/>
    <property type="evidence" value="ECO:0000318"/>
    <property type="project" value="GO_Central"/>
</dbReference>
<dbReference type="GO" id="GO:0005654">
    <property type="term" value="C:nucleoplasm"/>
    <property type="evidence" value="ECO:0000314"/>
    <property type="project" value="UniProtKB"/>
</dbReference>
<dbReference type="GO" id="GO:0005634">
    <property type="term" value="C:nucleus"/>
    <property type="evidence" value="ECO:0000250"/>
    <property type="project" value="UniProtKB"/>
</dbReference>
<dbReference type="GO" id="GO:0016538">
    <property type="term" value="F:cyclin-dependent protein serine/threonine kinase regulator activity"/>
    <property type="evidence" value="ECO:0000318"/>
    <property type="project" value="GO_Central"/>
</dbReference>
<dbReference type="GO" id="GO:0044843">
    <property type="term" value="P:cell cycle G1/S phase transition"/>
    <property type="evidence" value="ECO:0000250"/>
    <property type="project" value="UniProtKB"/>
</dbReference>
<dbReference type="GO" id="GO:0051301">
    <property type="term" value="P:cell division"/>
    <property type="evidence" value="ECO:0007669"/>
    <property type="project" value="UniProtKB-KW"/>
</dbReference>
<dbReference type="GO" id="GO:0000082">
    <property type="term" value="P:G1/S transition of mitotic cell cycle"/>
    <property type="evidence" value="ECO:0000318"/>
    <property type="project" value="GO_Central"/>
</dbReference>
<dbReference type="GO" id="GO:0000086">
    <property type="term" value="P:G2/M transition of mitotic cell cycle"/>
    <property type="evidence" value="ECO:0000250"/>
    <property type="project" value="UniProtKB"/>
</dbReference>
<dbReference type="CDD" id="cd20561">
    <property type="entry name" value="CYCLIN_CCNA2_rpt1"/>
    <property type="match status" value="1"/>
</dbReference>
<dbReference type="CDD" id="cd20564">
    <property type="entry name" value="CYCLIN_CCNA2_rpt2"/>
    <property type="match status" value="1"/>
</dbReference>
<dbReference type="FunFam" id="1.10.472.10:FF:000037">
    <property type="entry name" value="Cyclin-A2"/>
    <property type="match status" value="1"/>
</dbReference>
<dbReference type="Gene3D" id="1.10.472.10">
    <property type="entry name" value="Cyclin-like"/>
    <property type="match status" value="2"/>
</dbReference>
<dbReference type="InterPro" id="IPR039361">
    <property type="entry name" value="Cyclin"/>
</dbReference>
<dbReference type="InterPro" id="IPR032447">
    <property type="entry name" value="Cyclin-A_N"/>
</dbReference>
<dbReference type="InterPro" id="IPR013763">
    <property type="entry name" value="Cyclin-like_dom"/>
</dbReference>
<dbReference type="InterPro" id="IPR036915">
    <property type="entry name" value="Cyclin-like_sf"/>
</dbReference>
<dbReference type="InterPro" id="IPR046965">
    <property type="entry name" value="Cyclin_A/B-like"/>
</dbReference>
<dbReference type="InterPro" id="IPR004367">
    <property type="entry name" value="Cyclin_C-dom"/>
</dbReference>
<dbReference type="InterPro" id="IPR006671">
    <property type="entry name" value="Cyclin_N"/>
</dbReference>
<dbReference type="InterPro" id="IPR048258">
    <property type="entry name" value="Cyclins_cyclin-box"/>
</dbReference>
<dbReference type="PANTHER" id="PTHR10177">
    <property type="entry name" value="CYCLINS"/>
    <property type="match status" value="1"/>
</dbReference>
<dbReference type="Pfam" id="PF02984">
    <property type="entry name" value="Cyclin_C"/>
    <property type="match status" value="1"/>
</dbReference>
<dbReference type="Pfam" id="PF00134">
    <property type="entry name" value="Cyclin_N"/>
    <property type="match status" value="1"/>
</dbReference>
<dbReference type="Pfam" id="PF16500">
    <property type="entry name" value="Cyclin_N2"/>
    <property type="match status" value="1"/>
</dbReference>
<dbReference type="PIRSF" id="PIRSF001771">
    <property type="entry name" value="Cyclin_A_B_D_E"/>
    <property type="match status" value="1"/>
</dbReference>
<dbReference type="SMART" id="SM00385">
    <property type="entry name" value="CYCLIN"/>
    <property type="match status" value="2"/>
</dbReference>
<dbReference type="SMART" id="SM01332">
    <property type="entry name" value="Cyclin_C"/>
    <property type="match status" value="1"/>
</dbReference>
<dbReference type="SUPFAM" id="SSF47954">
    <property type="entry name" value="Cyclin-like"/>
    <property type="match status" value="2"/>
</dbReference>
<dbReference type="PROSITE" id="PS00292">
    <property type="entry name" value="CYCLINS"/>
    <property type="match status" value="1"/>
</dbReference>
<feature type="chain" id="PRO_0000080341" description="Cyclin-A2">
    <location>
        <begin position="1"/>
        <end position="395"/>
    </location>
</feature>
<feature type="region of interest" description="Disordered" evidence="2">
    <location>
        <begin position="1"/>
        <end position="93"/>
    </location>
</feature>
<feature type="compositionally biased region" description="Low complexity" evidence="2">
    <location>
        <begin position="27"/>
        <end position="60"/>
    </location>
</feature>
<gene>
    <name evidence="1" type="primary">CCNA2</name>
    <name type="synonym">CCNA</name>
    <name type="synonym">CYCA</name>
</gene>
<protein>
    <recommendedName>
        <fullName evidence="5">Cyclin-A2</fullName>
        <shortName evidence="4">Cyclin-A</shortName>
    </recommendedName>
</protein>
<comment type="function">
    <text evidence="1">Cyclin which controls both the G1/S and the G2/M transition phases of the cell cycle. Functions through the formation of specific serine/threonine kinase holoenzyme complexes with the cyclin-dependent protein kinases CDK1 and CDK2. The cyclin subunit confers the substrate specificity of these complexes and differentially interacts with and activates CDK1 and CDK2 throughout the cell cycle.</text>
</comment>
<comment type="subunit">
    <text evidence="3">Interacts with the CDK1 and CDK2 protein kinases to form serine/threonine kinase holoenzyme complexes.</text>
</comment>
<comment type="subcellular location">
    <subcellularLocation>
        <location evidence="3">Nucleus</location>
    </subcellularLocation>
    <subcellularLocation>
        <location evidence="1">Cytoplasm</location>
    </subcellularLocation>
</comment>
<comment type="similarity">
    <text evidence="5">Belongs to the cyclin family. Cyclin AB subfamily.</text>
</comment>
<keyword id="KW-0131">Cell cycle</keyword>
<keyword id="KW-0132">Cell division</keyword>
<keyword id="KW-0195">Cyclin</keyword>
<keyword id="KW-0963">Cytoplasm</keyword>
<keyword id="KW-0498">Mitosis</keyword>
<keyword id="KW-0539">Nucleus</keyword>
<keyword id="KW-1185">Reference proteome</keyword>
<proteinExistence type="evidence at protein level"/>